<comment type="catalytic activity">
    <reaction>
        <text>an acyl phosphate + H2O = a carboxylate + phosphate + H(+)</text>
        <dbReference type="Rhea" id="RHEA:14965"/>
        <dbReference type="ChEBI" id="CHEBI:15377"/>
        <dbReference type="ChEBI" id="CHEBI:15378"/>
        <dbReference type="ChEBI" id="CHEBI:29067"/>
        <dbReference type="ChEBI" id="CHEBI:43474"/>
        <dbReference type="ChEBI" id="CHEBI:59918"/>
        <dbReference type="EC" id="3.6.1.7"/>
    </reaction>
</comment>
<comment type="similarity">
    <text evidence="2">Belongs to the acylphosphatase family.</text>
</comment>
<gene>
    <name type="primary">acyP</name>
    <name type="ordered locus">CT0126</name>
</gene>
<evidence type="ECO:0000255" key="1">
    <source>
        <dbReference type="PROSITE-ProRule" id="PRU00520"/>
    </source>
</evidence>
<evidence type="ECO:0000305" key="2"/>
<organism>
    <name type="scientific">Chlorobaculum tepidum (strain ATCC 49652 / DSM 12025 / NBRC 103806 / TLS)</name>
    <name type="common">Chlorobium tepidum</name>
    <dbReference type="NCBI Taxonomy" id="194439"/>
    <lineage>
        <taxon>Bacteria</taxon>
        <taxon>Pseudomonadati</taxon>
        <taxon>Chlorobiota</taxon>
        <taxon>Chlorobiia</taxon>
        <taxon>Chlorobiales</taxon>
        <taxon>Chlorobiaceae</taxon>
        <taxon>Chlorobaculum</taxon>
    </lineage>
</organism>
<accession>Q8KG42</accession>
<proteinExistence type="inferred from homology"/>
<reference key="1">
    <citation type="journal article" date="2002" name="Proc. Natl. Acad. Sci. U.S.A.">
        <title>The complete genome sequence of Chlorobium tepidum TLS, a photosynthetic, anaerobic, green-sulfur bacterium.</title>
        <authorList>
            <person name="Eisen J.A."/>
            <person name="Nelson K.E."/>
            <person name="Paulsen I.T."/>
            <person name="Heidelberg J.F."/>
            <person name="Wu M."/>
            <person name="Dodson R.J."/>
            <person name="DeBoy R.T."/>
            <person name="Gwinn M.L."/>
            <person name="Nelson W.C."/>
            <person name="Haft D.H."/>
            <person name="Hickey E.K."/>
            <person name="Peterson J.D."/>
            <person name="Durkin A.S."/>
            <person name="Kolonay J.F."/>
            <person name="Yang F."/>
            <person name="Holt I.E."/>
            <person name="Umayam L.A."/>
            <person name="Mason T.M."/>
            <person name="Brenner M."/>
            <person name="Shea T.P."/>
            <person name="Parksey D.S."/>
            <person name="Nierman W.C."/>
            <person name="Feldblyum T.V."/>
            <person name="Hansen C.L."/>
            <person name="Craven M.B."/>
            <person name="Radune D."/>
            <person name="Vamathevan J.J."/>
            <person name="Khouri H.M."/>
            <person name="White O."/>
            <person name="Gruber T.M."/>
            <person name="Ketchum K.A."/>
            <person name="Venter J.C."/>
            <person name="Tettelin H."/>
            <person name="Bryant D.A."/>
            <person name="Fraser C.M."/>
        </authorList>
    </citation>
    <scope>NUCLEOTIDE SEQUENCE [LARGE SCALE GENOMIC DNA]</scope>
    <source>
        <strain>ATCC 49652 / DSM 12025 / NBRC 103806 / TLS</strain>
    </source>
</reference>
<protein>
    <recommendedName>
        <fullName>Acylphosphatase</fullName>
        <ecNumber>3.6.1.7</ecNumber>
    </recommendedName>
    <alternativeName>
        <fullName>Acylphosphate phosphohydrolase</fullName>
    </alternativeName>
</protein>
<name>ACYP_CHLTE</name>
<sequence length="92" mass="10259">MTEKRVHIIVSGLVQGVGFRMFVLREASARSLSGWTRNLPDGTVEVEAQGDSGRVDELIRQIRIGPSRSSVTSIKVKEIEVDTSCREFRILT</sequence>
<feature type="chain" id="PRO_0000326679" description="Acylphosphatase">
    <location>
        <begin position="1"/>
        <end position="92"/>
    </location>
</feature>
<feature type="domain" description="Acylphosphatase-like" evidence="1">
    <location>
        <begin position="5"/>
        <end position="92"/>
    </location>
</feature>
<feature type="active site" evidence="1">
    <location>
        <position position="20"/>
    </location>
</feature>
<feature type="active site" evidence="1">
    <location>
        <position position="38"/>
    </location>
</feature>
<keyword id="KW-0378">Hydrolase</keyword>
<keyword id="KW-1185">Reference proteome</keyword>
<dbReference type="EC" id="3.6.1.7"/>
<dbReference type="EMBL" id="AE006470">
    <property type="protein sequence ID" value="AAM71374.1"/>
    <property type="molecule type" value="Genomic_DNA"/>
</dbReference>
<dbReference type="RefSeq" id="NP_661032.1">
    <property type="nucleotide sequence ID" value="NC_002932.3"/>
</dbReference>
<dbReference type="RefSeq" id="WP_010931820.1">
    <property type="nucleotide sequence ID" value="NC_002932.3"/>
</dbReference>
<dbReference type="SMR" id="Q8KG42"/>
<dbReference type="STRING" id="194439.CT0126"/>
<dbReference type="EnsemblBacteria" id="AAM71374">
    <property type="protein sequence ID" value="AAM71374"/>
    <property type="gene ID" value="CT0126"/>
</dbReference>
<dbReference type="KEGG" id="cte:CT0126"/>
<dbReference type="PATRIC" id="fig|194439.7.peg.124"/>
<dbReference type="eggNOG" id="COG1254">
    <property type="taxonomic scope" value="Bacteria"/>
</dbReference>
<dbReference type="HOGENOM" id="CLU_141932_1_1_10"/>
<dbReference type="OrthoDB" id="9808093at2"/>
<dbReference type="Proteomes" id="UP000001007">
    <property type="component" value="Chromosome"/>
</dbReference>
<dbReference type="GO" id="GO:0003998">
    <property type="term" value="F:acylphosphatase activity"/>
    <property type="evidence" value="ECO:0007669"/>
    <property type="project" value="UniProtKB-EC"/>
</dbReference>
<dbReference type="Gene3D" id="3.30.70.100">
    <property type="match status" value="1"/>
</dbReference>
<dbReference type="InterPro" id="IPR020456">
    <property type="entry name" value="Acylphosphatase"/>
</dbReference>
<dbReference type="InterPro" id="IPR001792">
    <property type="entry name" value="Acylphosphatase-like_dom"/>
</dbReference>
<dbReference type="InterPro" id="IPR036046">
    <property type="entry name" value="Acylphosphatase-like_dom_sf"/>
</dbReference>
<dbReference type="InterPro" id="IPR017968">
    <property type="entry name" value="Acylphosphatase_CS"/>
</dbReference>
<dbReference type="NCBIfam" id="NF011017">
    <property type="entry name" value="PRK14445.1"/>
    <property type="match status" value="1"/>
</dbReference>
<dbReference type="PANTHER" id="PTHR47268">
    <property type="entry name" value="ACYLPHOSPHATASE"/>
    <property type="match status" value="1"/>
</dbReference>
<dbReference type="PANTHER" id="PTHR47268:SF4">
    <property type="entry name" value="ACYLPHOSPHATASE"/>
    <property type="match status" value="1"/>
</dbReference>
<dbReference type="Pfam" id="PF00708">
    <property type="entry name" value="Acylphosphatase"/>
    <property type="match status" value="1"/>
</dbReference>
<dbReference type="PRINTS" id="PR00112">
    <property type="entry name" value="ACYLPHPHTASE"/>
</dbReference>
<dbReference type="SUPFAM" id="SSF54975">
    <property type="entry name" value="Acylphosphatase/BLUF domain-like"/>
    <property type="match status" value="1"/>
</dbReference>
<dbReference type="PROSITE" id="PS00150">
    <property type="entry name" value="ACYLPHOSPHATASE_1"/>
    <property type="match status" value="1"/>
</dbReference>
<dbReference type="PROSITE" id="PS51160">
    <property type="entry name" value="ACYLPHOSPHATASE_3"/>
    <property type="match status" value="1"/>
</dbReference>